<sequence>MKTLLLTLLVVTIVCLDLGYTLECHNQQSSQTPTTKTCSGETNCYKKWWSDHRGTIIERGCGCPKVKPGVNLNCCTTDRCNN</sequence>
<dbReference type="EMBL" id="Y13399">
    <property type="protein sequence ID" value="CAA73829.2"/>
    <property type="molecule type" value="Genomic_DNA"/>
</dbReference>
<dbReference type="EMBL" id="AF031472">
    <property type="protein sequence ID" value="AAB86636.1"/>
    <property type="molecule type" value="mRNA"/>
</dbReference>
<dbReference type="EMBL" id="AF088997">
    <property type="protein sequence ID" value="AAD09179.1"/>
    <property type="molecule type" value="mRNA"/>
</dbReference>
<dbReference type="EMBL" id="AF088998">
    <property type="protein sequence ID" value="AAD09180.1"/>
    <property type="molecule type" value="mRNA"/>
</dbReference>
<dbReference type="EMBL" id="AY471579">
    <property type="protein sequence ID" value="AAR33036.1"/>
    <property type="molecule type" value="mRNA"/>
</dbReference>
<dbReference type="PIR" id="JC5892">
    <property type="entry name" value="JC5892"/>
</dbReference>
<dbReference type="PDB" id="1ONJ">
    <property type="method" value="X-ray"/>
    <property type="resolution" value="1.55 A"/>
    <property type="chains" value="A=22-82"/>
</dbReference>
<dbReference type="PDB" id="1VB0">
    <property type="method" value="X-ray"/>
    <property type="resolution" value="0.92 A"/>
    <property type="chains" value="A=22-82"/>
</dbReference>
<dbReference type="PDBsum" id="1ONJ"/>
<dbReference type="PDBsum" id="1VB0"/>
<dbReference type="SMR" id="P80958"/>
<dbReference type="EvolutionaryTrace" id="P80958"/>
<dbReference type="GO" id="GO:0005576">
    <property type="term" value="C:extracellular region"/>
    <property type="evidence" value="ECO:0007669"/>
    <property type="project" value="UniProtKB-SubCell"/>
</dbReference>
<dbReference type="GO" id="GO:0030550">
    <property type="term" value="F:acetylcholine receptor inhibitor activity"/>
    <property type="evidence" value="ECO:0007669"/>
    <property type="project" value="UniProtKB-KW"/>
</dbReference>
<dbReference type="GO" id="GO:0099106">
    <property type="term" value="F:ion channel regulator activity"/>
    <property type="evidence" value="ECO:0007669"/>
    <property type="project" value="UniProtKB-KW"/>
</dbReference>
<dbReference type="GO" id="GO:0090729">
    <property type="term" value="F:toxin activity"/>
    <property type="evidence" value="ECO:0007669"/>
    <property type="project" value="UniProtKB-KW"/>
</dbReference>
<dbReference type="CDD" id="cd00206">
    <property type="entry name" value="TFP_snake_toxin"/>
    <property type="match status" value="1"/>
</dbReference>
<dbReference type="FunFam" id="2.10.60.10:FF:000024">
    <property type="entry name" value="Cytotoxin 1"/>
    <property type="match status" value="1"/>
</dbReference>
<dbReference type="Gene3D" id="2.10.60.10">
    <property type="entry name" value="CD59"/>
    <property type="match status" value="1"/>
</dbReference>
<dbReference type="InterPro" id="IPR003571">
    <property type="entry name" value="Snake_3FTx"/>
</dbReference>
<dbReference type="InterPro" id="IPR045860">
    <property type="entry name" value="Snake_toxin-like_sf"/>
</dbReference>
<dbReference type="InterPro" id="IPR018354">
    <property type="entry name" value="Snake_toxin_con_site"/>
</dbReference>
<dbReference type="InterPro" id="IPR054131">
    <property type="entry name" value="Toxin_cobra-type"/>
</dbReference>
<dbReference type="Pfam" id="PF21947">
    <property type="entry name" value="Toxin_cobra-type"/>
    <property type="match status" value="1"/>
</dbReference>
<dbReference type="SUPFAM" id="SSF57302">
    <property type="entry name" value="Snake toxin-like"/>
    <property type="match status" value="1"/>
</dbReference>
<dbReference type="PROSITE" id="PS00272">
    <property type="entry name" value="SNAKE_TOXIN"/>
    <property type="match status" value="1"/>
</dbReference>
<proteinExistence type="evidence at protein level"/>
<comment type="function">
    <text evidence="3">Binds to muscle nicotinic acetylcholine receptor (nAChR) and inhibit acetylcholine from binding to the receptor, thereby impairing neuromuscular transmission. Produces peripheral paralysis by blocking neuromuscular transmission at the postsynaptic site. Has a lower toxicity than cobrotoxin.</text>
</comment>
<comment type="subcellular location">
    <subcellularLocation>
        <location evidence="3">Secreted</location>
    </subcellularLocation>
</comment>
<comment type="tissue specificity">
    <text evidence="4">Expressed by the venom gland.</text>
</comment>
<comment type="mass spectrometry"/>
<comment type="toxic dose">
    <text evidence="1">LD(50) is 0.18 mg/kg by intravenous injection into mice.</text>
</comment>
<comment type="similarity">
    <text evidence="4">Belongs to the three-finger toxin family. Short-chain subfamily. Type I alpha-neurotoxin sub-subfamily.</text>
</comment>
<protein>
    <recommendedName>
        <fullName>Cobrotoxin-b</fullName>
        <shortName>CBT-b</shortName>
    </recommendedName>
    <alternativeName>
        <fullName>Atratoxin-b</fullName>
    </alternativeName>
    <alternativeName>
        <fullName>Cobrotoxin III</fullName>
        <shortName>CBT-III</shortName>
    </alternativeName>
    <alternativeName>
        <fullName>Cobrotoxin IV</fullName>
        <shortName>CBT IV</shortName>
    </alternativeName>
    <alternativeName>
        <fullName>NT3</fullName>
    </alternativeName>
    <alternativeName>
        <fullName>Short neurotoxin</fullName>
    </alternativeName>
</protein>
<accession>P80958</accession>
<accession>O42285</accession>
<accession>Q6S468</accession>
<accession>Q9YHU9</accession>
<accession>Q9YHV0</accession>
<name>3S1CC_NAJAT</name>
<evidence type="ECO:0000269" key="1">
    <source>
    </source>
</evidence>
<evidence type="ECO:0000269" key="2">
    <source>
    </source>
</evidence>
<evidence type="ECO:0000269" key="3">
    <source>
    </source>
</evidence>
<evidence type="ECO:0000305" key="4"/>
<evidence type="ECO:0000312" key="5">
    <source>
        <dbReference type="PDB" id="1ONJ"/>
    </source>
</evidence>
<evidence type="ECO:0000312" key="6">
    <source>
        <dbReference type="PDB" id="1VB0"/>
    </source>
</evidence>
<evidence type="ECO:0007829" key="7">
    <source>
        <dbReference type="PDB" id="1VB0"/>
    </source>
</evidence>
<organism>
    <name type="scientific">Naja atra</name>
    <name type="common">Chinese cobra</name>
    <dbReference type="NCBI Taxonomy" id="8656"/>
    <lineage>
        <taxon>Eukaryota</taxon>
        <taxon>Metazoa</taxon>
        <taxon>Chordata</taxon>
        <taxon>Craniata</taxon>
        <taxon>Vertebrata</taxon>
        <taxon>Euteleostomi</taxon>
        <taxon>Lepidosauria</taxon>
        <taxon>Squamata</taxon>
        <taxon>Bifurcata</taxon>
        <taxon>Unidentata</taxon>
        <taxon>Episquamata</taxon>
        <taxon>Toxicofera</taxon>
        <taxon>Serpentes</taxon>
        <taxon>Colubroidea</taxon>
        <taxon>Elapidae</taxon>
        <taxon>Elapinae</taxon>
        <taxon>Naja</taxon>
    </lineage>
</organism>
<feature type="signal peptide" evidence="1 3">
    <location>
        <begin position="1"/>
        <end position="21"/>
    </location>
</feature>
<feature type="chain" id="PRO_0000035456" description="Cobrotoxin-b" evidence="3">
    <location>
        <begin position="22"/>
        <end position="82"/>
    </location>
</feature>
<feature type="disulfide bond" evidence="1 2 5 6">
    <location>
        <begin position="24"/>
        <end position="44"/>
    </location>
</feature>
<feature type="disulfide bond" evidence="1 2 5 6">
    <location>
        <begin position="38"/>
        <end position="61"/>
    </location>
</feature>
<feature type="disulfide bond" evidence="1 2 5 6">
    <location>
        <begin position="63"/>
        <end position="74"/>
    </location>
</feature>
<feature type="disulfide bond" evidence="1 2 5 6">
    <location>
        <begin position="75"/>
        <end position="80"/>
    </location>
</feature>
<feature type="sequence conflict" description="In Ref. 3; AAD09179/AAD09180." evidence="4" ref="3">
    <original>L</original>
    <variation>M</variation>
    <location>
        <position position="22"/>
    </location>
</feature>
<feature type="sequence conflict" description="In Ref. 3; AAD09179." evidence="4" ref="3">
    <original>T</original>
    <variation>A</variation>
    <location>
        <position position="32"/>
    </location>
</feature>
<feature type="sequence conflict" description="In Ref. 5; AA sequence." evidence="4" ref="5">
    <original>T</original>
    <variation>TI</variation>
    <location>
        <position position="34"/>
    </location>
</feature>
<feature type="sequence conflict" description="In Ref. 3; AAD09180." evidence="4" ref="3">
    <original>KTCS</original>
    <variation>TGCSG</variation>
    <location>
        <begin position="36"/>
        <end position="39"/>
    </location>
</feature>
<feature type="strand" evidence="7">
    <location>
        <begin position="23"/>
        <end position="25"/>
    </location>
</feature>
<feature type="strand" evidence="7">
    <location>
        <begin position="35"/>
        <end position="37"/>
    </location>
</feature>
<feature type="strand" evidence="7">
    <location>
        <begin position="44"/>
        <end position="51"/>
    </location>
</feature>
<feature type="strand" evidence="7">
    <location>
        <begin position="54"/>
        <end position="62"/>
    </location>
</feature>
<feature type="strand" evidence="7">
    <location>
        <begin position="71"/>
        <end position="75"/>
    </location>
</feature>
<feature type="turn" evidence="7">
    <location>
        <begin position="78"/>
        <end position="81"/>
    </location>
</feature>
<reference key="1">
    <citation type="journal article" date="1997" name="J. Biochem.">
        <title>A novel neurotoxin, cobrotoxin b, from Naja naja atra (Taiwan cobra) venom: purification, characterization, and gene organization.</title>
        <authorList>
            <person name="Chang L.-S."/>
            <person name="Chou Y.-C."/>
            <person name="Lin S.-R."/>
            <person name="Wu B.-N."/>
            <person name="Lin J."/>
            <person name="Hong E."/>
            <person name="Sun Y.-J."/>
            <person name="Hsiao C.-D."/>
        </authorList>
    </citation>
    <scope>NUCLEOTIDE SEQUENCE [GENOMIC DNA]</scope>
    <scope>PROTEIN SEQUENCE OF 22-82</scope>
    <scope>FUNCTION</scope>
    <scope>SUBCELLULAR LOCATION</scope>
    <source>
        <tissue>Liver</tissue>
        <tissue>Venom</tissue>
    </source>
</reference>
<reference key="2">
    <citation type="submission" date="1997-10" db="EMBL/GenBank/DDBJ databases">
        <authorList>
            <person name="Chu R.C."/>
            <person name="Yang C.-C."/>
        </authorList>
    </citation>
    <scope>NUCLEOTIDE SEQUENCE [MRNA]</scope>
    <scope>SEQUENCE REVISION TO 67</scope>
    <source>
        <tissue>Venom gland</tissue>
    </source>
</reference>
<reference key="3">
    <citation type="submission" date="1998-09" db="EMBL/GenBank/DDBJ databases">
        <title>Molecular cloning, sequence analysis and expression of cobrotoxin from Naja naja atra.</title>
        <authorList>
            <person name="Pan H."/>
            <person name="Wu J."/>
            <person name="Yang G.Z."/>
            <person name="Wu X.F."/>
        </authorList>
    </citation>
    <scope>NUCLEOTIDE SEQUENCE [MRNA] OF 22-82</scope>
    <source>
        <tissue>Venom gland</tissue>
    </source>
</reference>
<reference key="4">
    <citation type="journal article" date="2004" name="J. Biol. Chem.">
        <title>The atomic resolution crystal structure of atratoxin determined by single wavelength anomalous diffraction phasing.</title>
        <authorList>
            <person name="Lou X."/>
            <person name="Liu Q."/>
            <person name="Tu X."/>
            <person name="Wang J."/>
            <person name="Teng M."/>
            <person name="Niu L."/>
            <person name="Schuller D.J."/>
            <person name="Huang Q."/>
            <person name="Hao Q."/>
        </authorList>
    </citation>
    <scope>NUCLEOTIDE SEQUENCE [MRNA] OF 10-82</scope>
    <scope>X-RAY CRYSTALLOGRAPHY (0.92 ANGSTROMS) OF 22-82</scope>
    <scope>DISULFIDE BOND</scope>
    <source>
        <tissue>Venom gland</tissue>
    </source>
</reference>
<reference key="5">
    <citation type="journal article" date="2003" name="Acta Crystallogr. D">
        <title>Purification, N-terminal sequencing, crystallization and preliminary structural determination of atratoxin-b, a short-chain alpha-neurotoxin from Naja atra venom.</title>
        <authorList>
            <person name="Lou X."/>
            <person name="Tu X."/>
            <person name="Pan G."/>
            <person name="Xu C."/>
            <person name="Fan R."/>
            <person name="Lu W."/>
            <person name="Deng W."/>
            <person name="Rao P."/>
            <person name="Teng M."/>
            <person name="Niu L."/>
        </authorList>
    </citation>
    <scope>PROTEIN SEQUENCE OF 22-35</scope>
    <scope>STRUCTURE BY NMR OF 22-82</scope>
    <scope>TOXIC DOSE</scope>
    <scope>MASS SPECTROMETRY</scope>
    <scope>DISULFIDE BOND</scope>
    <source>
        <tissue>Venom</tissue>
    </source>
</reference>
<keyword id="KW-0002">3D-structure</keyword>
<keyword id="KW-0008">Acetylcholine receptor inhibiting toxin</keyword>
<keyword id="KW-0903">Direct protein sequencing</keyword>
<keyword id="KW-1015">Disulfide bond</keyword>
<keyword id="KW-0872">Ion channel impairing toxin</keyword>
<keyword id="KW-0528">Neurotoxin</keyword>
<keyword id="KW-0629">Postsynaptic neurotoxin</keyword>
<keyword id="KW-0964">Secreted</keyword>
<keyword id="KW-0732">Signal</keyword>
<keyword id="KW-0800">Toxin</keyword>